<reference key="1">
    <citation type="journal article" date="2005" name="Proc. Natl. Acad. Sci. U.S.A.">
        <title>Complete genome sequence of the probiotic lactic acid bacterium Lactobacillus acidophilus NCFM.</title>
        <authorList>
            <person name="Altermann E."/>
            <person name="Russell W.M."/>
            <person name="Azcarate-Peril M.A."/>
            <person name="Barrangou R."/>
            <person name="Buck B.L."/>
            <person name="McAuliffe O."/>
            <person name="Souther N."/>
            <person name="Dobson A."/>
            <person name="Duong T."/>
            <person name="Callanan M."/>
            <person name="Lick S."/>
            <person name="Hamrick A."/>
            <person name="Cano R."/>
            <person name="Klaenhammer T.R."/>
        </authorList>
    </citation>
    <scope>NUCLEOTIDE SEQUENCE [LARGE SCALE GENOMIC DNA]</scope>
    <source>
        <strain>ATCC 700396 / NCK56 / N2 / NCFM</strain>
    </source>
</reference>
<dbReference type="EMBL" id="CP000033">
    <property type="protein sequence ID" value="AAV42779.1"/>
    <property type="molecule type" value="Genomic_DNA"/>
</dbReference>
<dbReference type="RefSeq" id="WP_003547026.1">
    <property type="nucleotide sequence ID" value="NC_006814.3"/>
</dbReference>
<dbReference type="RefSeq" id="YP_193810.1">
    <property type="nucleotide sequence ID" value="NC_006814.3"/>
</dbReference>
<dbReference type="STRING" id="272621.LBA0922"/>
<dbReference type="KEGG" id="lac:LBA0922"/>
<dbReference type="PATRIC" id="fig|272621.13.peg.879"/>
<dbReference type="eggNOG" id="COG4720">
    <property type="taxonomic scope" value="Bacteria"/>
</dbReference>
<dbReference type="HOGENOM" id="CLU_120023_0_0_9"/>
<dbReference type="OrthoDB" id="4550662at2"/>
<dbReference type="BioCyc" id="LACI272621:G1G49-929-MONOMER"/>
<dbReference type="Proteomes" id="UP000006381">
    <property type="component" value="Chromosome"/>
</dbReference>
<dbReference type="GO" id="GO:0005886">
    <property type="term" value="C:plasma membrane"/>
    <property type="evidence" value="ECO:0007669"/>
    <property type="project" value="UniProtKB-SubCell"/>
</dbReference>
<dbReference type="Gene3D" id="1.10.1760.20">
    <property type="match status" value="1"/>
</dbReference>
<dbReference type="HAMAP" id="MF_01572">
    <property type="entry name" value="UPF0397"/>
    <property type="match status" value="1"/>
</dbReference>
<dbReference type="InterPro" id="IPR009825">
    <property type="entry name" value="ECF_substrate-spec-like"/>
</dbReference>
<dbReference type="InterPro" id="IPR022914">
    <property type="entry name" value="UPF0397"/>
</dbReference>
<dbReference type="NCBIfam" id="NF010182">
    <property type="entry name" value="PRK13661.1"/>
    <property type="match status" value="1"/>
</dbReference>
<dbReference type="PANTHER" id="PTHR37815">
    <property type="entry name" value="UPF0397 PROTEIN BC_2624-RELATED"/>
    <property type="match status" value="1"/>
</dbReference>
<dbReference type="PANTHER" id="PTHR37815:SF3">
    <property type="entry name" value="UPF0397 PROTEIN SPR0429"/>
    <property type="match status" value="1"/>
</dbReference>
<dbReference type="Pfam" id="PF07155">
    <property type="entry name" value="ECF-ribofla_trS"/>
    <property type="match status" value="1"/>
</dbReference>
<accession>Q5FKJ5</accession>
<feature type="chain" id="PRO_0000260793" description="UPF0397 protein LBA0922">
    <location>
        <begin position="1"/>
        <end position="185"/>
    </location>
</feature>
<feature type="transmembrane region" description="Helical" evidence="1">
    <location>
        <begin position="11"/>
        <end position="31"/>
    </location>
</feature>
<feature type="transmembrane region" description="Helical" evidence="1">
    <location>
        <begin position="45"/>
        <end position="65"/>
    </location>
</feature>
<feature type="transmembrane region" description="Helical" evidence="1">
    <location>
        <begin position="72"/>
        <end position="92"/>
    </location>
</feature>
<feature type="transmembrane region" description="Helical" evidence="1">
    <location>
        <begin position="111"/>
        <end position="131"/>
    </location>
</feature>
<feature type="transmembrane region" description="Helical" evidence="1">
    <location>
        <begin position="146"/>
        <end position="166"/>
    </location>
</feature>
<name>Y922_LACAC</name>
<proteinExistence type="inferred from homology"/>
<organism>
    <name type="scientific">Lactobacillus acidophilus (strain ATCC 700396 / NCK56 / N2 / NCFM)</name>
    <dbReference type="NCBI Taxonomy" id="272621"/>
    <lineage>
        <taxon>Bacteria</taxon>
        <taxon>Bacillati</taxon>
        <taxon>Bacillota</taxon>
        <taxon>Bacilli</taxon>
        <taxon>Lactobacillales</taxon>
        <taxon>Lactobacillaceae</taxon>
        <taxon>Lactobacillus</taxon>
    </lineage>
</organism>
<protein>
    <recommendedName>
        <fullName evidence="1">UPF0397 protein LBA0922</fullName>
    </recommendedName>
</protein>
<sequence>MNNTGLSVKKVVAIGIGSAIYVILARFTSIPTPIPNTNIELVFPFLAFFASIYGATVGFSVGFIGHALSDFIMYGQTWWSWVLATGILGWIIGLAYKRLDLKNGIFGLKQIILFNIVQIIANILAWIVVAPIGDIIIYSEPANKVFVQGISATISNGISILIIGTILLKAYASTKIKKGSLRKED</sequence>
<evidence type="ECO:0000255" key="1">
    <source>
        <dbReference type="HAMAP-Rule" id="MF_01572"/>
    </source>
</evidence>
<gene>
    <name type="ordered locus">LBA0922</name>
</gene>
<keyword id="KW-1003">Cell membrane</keyword>
<keyword id="KW-0472">Membrane</keyword>
<keyword id="KW-1185">Reference proteome</keyword>
<keyword id="KW-0812">Transmembrane</keyword>
<keyword id="KW-1133">Transmembrane helix</keyword>
<comment type="subcellular location">
    <subcellularLocation>
        <location evidence="1">Cell membrane</location>
        <topology evidence="1">Multi-pass membrane protein</topology>
    </subcellularLocation>
</comment>
<comment type="similarity">
    <text evidence="1">Belongs to the UPF0397 family.</text>
</comment>